<evidence type="ECO:0000255" key="1">
    <source>
        <dbReference type="HAMAP-Rule" id="MF_01818"/>
    </source>
</evidence>
<name>RNZ_STRSV</name>
<proteinExistence type="inferred from homology"/>
<organism>
    <name type="scientific">Streptococcus sanguinis (strain SK36)</name>
    <dbReference type="NCBI Taxonomy" id="388919"/>
    <lineage>
        <taxon>Bacteria</taxon>
        <taxon>Bacillati</taxon>
        <taxon>Bacillota</taxon>
        <taxon>Bacilli</taxon>
        <taxon>Lactobacillales</taxon>
        <taxon>Streptococcaceae</taxon>
        <taxon>Streptococcus</taxon>
    </lineage>
</organism>
<sequence>MQLQFLGTGAGQPSKARNVSSLVLKLLEEINEVWMFDCGEGTQHQILETTIKPRKISKIFITHLHGDHIFGLPGFLSSRSFQANEEQTNLEIYGPKGIKNFVLSSLRVSGSRLPYRIDFHEFDENSLGKILETDKFTVYADKLDHTIFCVGYRVMQKDLEGTLDADKLREVGVPFGPLFGKVKNGQDIVLEDGTKIIAADYISAPRPGKIIAILGDTRKTSASVRLAVAADVLVHEATYGKGDEKLARNHGHSTNMQAAEVAKEAGAKRLLLNHISARFLAKDISQMRRDASAVFEKVHVVKDLEEVEI</sequence>
<comment type="function">
    <text evidence="1">Zinc phosphodiesterase, which displays some tRNA 3'-processing endonuclease activity. Probably involved in tRNA maturation, by removing a 3'-trailer from precursor tRNA.</text>
</comment>
<comment type="catalytic activity">
    <reaction evidence="1">
        <text>Endonucleolytic cleavage of RNA, removing extra 3' nucleotides from tRNA precursor, generating 3' termini of tRNAs. A 3'-hydroxy group is left at the tRNA terminus and a 5'-phosphoryl group is left at the trailer molecule.</text>
        <dbReference type="EC" id="3.1.26.11"/>
    </reaction>
</comment>
<comment type="cofactor">
    <cofactor evidence="1">
        <name>Zn(2+)</name>
        <dbReference type="ChEBI" id="CHEBI:29105"/>
    </cofactor>
    <text evidence="1">Binds 2 Zn(2+) ions.</text>
</comment>
<comment type="subunit">
    <text evidence="1">Homodimer.</text>
</comment>
<comment type="similarity">
    <text evidence="1">Belongs to the RNase Z family.</text>
</comment>
<gene>
    <name evidence="1" type="primary">rnz</name>
    <name type="ordered locus">SSA_1430</name>
</gene>
<reference key="1">
    <citation type="journal article" date="2007" name="J. Bacteriol.">
        <title>Genome of the opportunistic pathogen Streptococcus sanguinis.</title>
        <authorList>
            <person name="Xu P."/>
            <person name="Alves J.M."/>
            <person name="Kitten T."/>
            <person name="Brown A."/>
            <person name="Chen Z."/>
            <person name="Ozaki L.S."/>
            <person name="Manque P."/>
            <person name="Ge X."/>
            <person name="Serrano M.G."/>
            <person name="Puiu D."/>
            <person name="Hendricks S."/>
            <person name="Wang Y."/>
            <person name="Chaplin M.D."/>
            <person name="Akan D."/>
            <person name="Paik S."/>
            <person name="Peterson D.L."/>
            <person name="Macrina F.L."/>
            <person name="Buck G.A."/>
        </authorList>
    </citation>
    <scope>NUCLEOTIDE SEQUENCE [LARGE SCALE GENOMIC DNA]</scope>
    <source>
        <strain>SK36</strain>
    </source>
</reference>
<accession>A3CNR9</accession>
<dbReference type="EC" id="3.1.26.11" evidence="1"/>
<dbReference type="EMBL" id="CP000387">
    <property type="protein sequence ID" value="ABN44824.1"/>
    <property type="molecule type" value="Genomic_DNA"/>
</dbReference>
<dbReference type="RefSeq" id="WP_011837129.1">
    <property type="nucleotide sequence ID" value="NC_009009.1"/>
</dbReference>
<dbReference type="RefSeq" id="YP_001035374.1">
    <property type="nucleotide sequence ID" value="NC_009009.1"/>
</dbReference>
<dbReference type="SMR" id="A3CNR9"/>
<dbReference type="STRING" id="388919.SSA_1430"/>
<dbReference type="KEGG" id="ssa:SSA_1430"/>
<dbReference type="PATRIC" id="fig|388919.9.peg.1356"/>
<dbReference type="eggNOG" id="COG1234">
    <property type="taxonomic scope" value="Bacteria"/>
</dbReference>
<dbReference type="HOGENOM" id="CLU_031317_2_0_9"/>
<dbReference type="OrthoDB" id="9800940at2"/>
<dbReference type="Proteomes" id="UP000002148">
    <property type="component" value="Chromosome"/>
</dbReference>
<dbReference type="GO" id="GO:0042781">
    <property type="term" value="F:3'-tRNA processing endoribonuclease activity"/>
    <property type="evidence" value="ECO:0007669"/>
    <property type="project" value="UniProtKB-UniRule"/>
</dbReference>
<dbReference type="GO" id="GO:0008270">
    <property type="term" value="F:zinc ion binding"/>
    <property type="evidence" value="ECO:0007669"/>
    <property type="project" value="UniProtKB-UniRule"/>
</dbReference>
<dbReference type="CDD" id="cd07717">
    <property type="entry name" value="RNaseZ_ZiPD-like_MBL-fold"/>
    <property type="match status" value="1"/>
</dbReference>
<dbReference type="FunFam" id="3.60.15.10:FF:000002">
    <property type="entry name" value="Ribonuclease Z"/>
    <property type="match status" value="1"/>
</dbReference>
<dbReference type="Gene3D" id="3.60.15.10">
    <property type="entry name" value="Ribonuclease Z/Hydroxyacylglutathione hydrolase-like"/>
    <property type="match status" value="1"/>
</dbReference>
<dbReference type="HAMAP" id="MF_01818">
    <property type="entry name" value="RNase_Z_BN"/>
    <property type="match status" value="1"/>
</dbReference>
<dbReference type="InterPro" id="IPR001279">
    <property type="entry name" value="Metallo-B-lactamas"/>
</dbReference>
<dbReference type="InterPro" id="IPR036866">
    <property type="entry name" value="RibonucZ/Hydroxyglut_hydro"/>
</dbReference>
<dbReference type="InterPro" id="IPR013471">
    <property type="entry name" value="RNase_Z/BN"/>
</dbReference>
<dbReference type="NCBIfam" id="NF000801">
    <property type="entry name" value="PRK00055.1-3"/>
    <property type="match status" value="1"/>
</dbReference>
<dbReference type="NCBIfam" id="TIGR02651">
    <property type="entry name" value="RNase_Z"/>
    <property type="match status" value="1"/>
</dbReference>
<dbReference type="PANTHER" id="PTHR46018">
    <property type="entry name" value="ZINC PHOSPHODIESTERASE ELAC PROTEIN 1"/>
    <property type="match status" value="1"/>
</dbReference>
<dbReference type="PANTHER" id="PTHR46018:SF2">
    <property type="entry name" value="ZINC PHOSPHODIESTERASE ELAC PROTEIN 1"/>
    <property type="match status" value="1"/>
</dbReference>
<dbReference type="Pfam" id="PF00753">
    <property type="entry name" value="Lactamase_B"/>
    <property type="match status" value="1"/>
</dbReference>
<dbReference type="SUPFAM" id="SSF56281">
    <property type="entry name" value="Metallo-hydrolase/oxidoreductase"/>
    <property type="match status" value="1"/>
</dbReference>
<feature type="chain" id="PRO_1000070342" description="Ribonuclease Z">
    <location>
        <begin position="1"/>
        <end position="309"/>
    </location>
</feature>
<feature type="active site" description="Proton acceptor" evidence="1">
    <location>
        <position position="67"/>
    </location>
</feature>
<feature type="binding site" evidence="1">
    <location>
        <position position="63"/>
    </location>
    <ligand>
        <name>Zn(2+)</name>
        <dbReference type="ChEBI" id="CHEBI:29105"/>
        <label>1</label>
        <note>catalytic</note>
    </ligand>
</feature>
<feature type="binding site" evidence="1">
    <location>
        <position position="65"/>
    </location>
    <ligand>
        <name>Zn(2+)</name>
        <dbReference type="ChEBI" id="CHEBI:29105"/>
        <label>1</label>
        <note>catalytic</note>
    </ligand>
</feature>
<feature type="binding site" evidence="1">
    <location>
        <position position="67"/>
    </location>
    <ligand>
        <name>Zn(2+)</name>
        <dbReference type="ChEBI" id="CHEBI:29105"/>
        <label>2</label>
        <note>catalytic</note>
    </ligand>
</feature>
<feature type="binding site" evidence="1">
    <location>
        <position position="68"/>
    </location>
    <ligand>
        <name>Zn(2+)</name>
        <dbReference type="ChEBI" id="CHEBI:29105"/>
        <label>2</label>
        <note>catalytic</note>
    </ligand>
</feature>
<feature type="binding site" evidence="1">
    <location>
        <position position="145"/>
    </location>
    <ligand>
        <name>Zn(2+)</name>
        <dbReference type="ChEBI" id="CHEBI:29105"/>
        <label>1</label>
        <note>catalytic</note>
    </ligand>
</feature>
<feature type="binding site" evidence="1">
    <location>
        <position position="216"/>
    </location>
    <ligand>
        <name>Zn(2+)</name>
        <dbReference type="ChEBI" id="CHEBI:29105"/>
        <label>1</label>
        <note>catalytic</note>
    </ligand>
</feature>
<feature type="binding site" evidence="1">
    <location>
        <position position="216"/>
    </location>
    <ligand>
        <name>Zn(2+)</name>
        <dbReference type="ChEBI" id="CHEBI:29105"/>
        <label>2</label>
        <note>catalytic</note>
    </ligand>
</feature>
<feature type="binding site" evidence="1">
    <location>
        <position position="274"/>
    </location>
    <ligand>
        <name>Zn(2+)</name>
        <dbReference type="ChEBI" id="CHEBI:29105"/>
        <label>2</label>
        <note>catalytic</note>
    </ligand>
</feature>
<keyword id="KW-0255">Endonuclease</keyword>
<keyword id="KW-0378">Hydrolase</keyword>
<keyword id="KW-0479">Metal-binding</keyword>
<keyword id="KW-0540">Nuclease</keyword>
<keyword id="KW-1185">Reference proteome</keyword>
<keyword id="KW-0819">tRNA processing</keyword>
<keyword id="KW-0862">Zinc</keyword>
<protein>
    <recommendedName>
        <fullName evidence="1">Ribonuclease Z</fullName>
        <shortName evidence="1">RNase Z</shortName>
        <ecNumber evidence="1">3.1.26.11</ecNumber>
    </recommendedName>
    <alternativeName>
        <fullName evidence="1">tRNA 3 endonuclease</fullName>
    </alternativeName>
    <alternativeName>
        <fullName evidence="1">tRNase Z</fullName>
    </alternativeName>
</protein>